<protein>
    <recommendedName>
        <fullName evidence="1">Ribonuclease 3</fullName>
        <ecNumber evidence="1">3.1.26.3</ecNumber>
    </recommendedName>
    <alternativeName>
        <fullName evidence="1">Ribonuclease III</fullName>
        <shortName evidence="1">RNase III</shortName>
    </alternativeName>
</protein>
<reference key="1">
    <citation type="submission" date="2007-11" db="EMBL/GenBank/DDBJ databases">
        <title>Genome sequencing of phylogenetically and phenotypically diverse Coxiella burnetii isolates.</title>
        <authorList>
            <person name="Seshadri R."/>
            <person name="Samuel J.E."/>
        </authorList>
    </citation>
    <scope>NUCLEOTIDE SEQUENCE [LARGE SCALE GENOMIC DNA]</scope>
    <source>
        <strain>RSA 331 / Henzerling II</strain>
    </source>
</reference>
<proteinExistence type="inferred from homology"/>
<name>RNC_COXBR</name>
<accession>A9N942</accession>
<dbReference type="EC" id="3.1.26.3" evidence="1"/>
<dbReference type="EMBL" id="CP000890">
    <property type="protein sequence ID" value="ABX78161.1"/>
    <property type="molecule type" value="Genomic_DNA"/>
</dbReference>
<dbReference type="RefSeq" id="WP_010958268.1">
    <property type="nucleotide sequence ID" value="NC_010117.1"/>
</dbReference>
<dbReference type="SMR" id="A9N942"/>
<dbReference type="KEGG" id="cbs:COXBURSA331_A1686"/>
<dbReference type="HOGENOM" id="CLU_000907_1_1_6"/>
<dbReference type="GO" id="GO:0005737">
    <property type="term" value="C:cytoplasm"/>
    <property type="evidence" value="ECO:0007669"/>
    <property type="project" value="UniProtKB-SubCell"/>
</dbReference>
<dbReference type="GO" id="GO:0003725">
    <property type="term" value="F:double-stranded RNA binding"/>
    <property type="evidence" value="ECO:0007669"/>
    <property type="project" value="TreeGrafter"/>
</dbReference>
<dbReference type="GO" id="GO:0046872">
    <property type="term" value="F:metal ion binding"/>
    <property type="evidence" value="ECO:0007669"/>
    <property type="project" value="UniProtKB-KW"/>
</dbReference>
<dbReference type="GO" id="GO:0004525">
    <property type="term" value="F:ribonuclease III activity"/>
    <property type="evidence" value="ECO:0007669"/>
    <property type="project" value="UniProtKB-UniRule"/>
</dbReference>
<dbReference type="GO" id="GO:0019843">
    <property type="term" value="F:rRNA binding"/>
    <property type="evidence" value="ECO:0007669"/>
    <property type="project" value="UniProtKB-KW"/>
</dbReference>
<dbReference type="GO" id="GO:0006397">
    <property type="term" value="P:mRNA processing"/>
    <property type="evidence" value="ECO:0007669"/>
    <property type="project" value="UniProtKB-UniRule"/>
</dbReference>
<dbReference type="GO" id="GO:0010468">
    <property type="term" value="P:regulation of gene expression"/>
    <property type="evidence" value="ECO:0007669"/>
    <property type="project" value="TreeGrafter"/>
</dbReference>
<dbReference type="GO" id="GO:0006364">
    <property type="term" value="P:rRNA processing"/>
    <property type="evidence" value="ECO:0007669"/>
    <property type="project" value="UniProtKB-UniRule"/>
</dbReference>
<dbReference type="GO" id="GO:0008033">
    <property type="term" value="P:tRNA processing"/>
    <property type="evidence" value="ECO:0007669"/>
    <property type="project" value="UniProtKB-KW"/>
</dbReference>
<dbReference type="CDD" id="cd10845">
    <property type="entry name" value="DSRM_RNAse_III_family"/>
    <property type="match status" value="1"/>
</dbReference>
<dbReference type="CDD" id="cd00593">
    <property type="entry name" value="RIBOc"/>
    <property type="match status" value="1"/>
</dbReference>
<dbReference type="FunFam" id="1.10.1520.10:FF:000001">
    <property type="entry name" value="Ribonuclease 3"/>
    <property type="match status" value="1"/>
</dbReference>
<dbReference type="FunFam" id="3.30.160.20:FF:000003">
    <property type="entry name" value="Ribonuclease 3"/>
    <property type="match status" value="1"/>
</dbReference>
<dbReference type="Gene3D" id="3.30.160.20">
    <property type="match status" value="1"/>
</dbReference>
<dbReference type="Gene3D" id="1.10.1520.10">
    <property type="entry name" value="Ribonuclease III domain"/>
    <property type="match status" value="1"/>
</dbReference>
<dbReference type="HAMAP" id="MF_00104">
    <property type="entry name" value="RNase_III"/>
    <property type="match status" value="1"/>
</dbReference>
<dbReference type="InterPro" id="IPR014720">
    <property type="entry name" value="dsRBD_dom"/>
</dbReference>
<dbReference type="InterPro" id="IPR011907">
    <property type="entry name" value="RNase_III"/>
</dbReference>
<dbReference type="InterPro" id="IPR000999">
    <property type="entry name" value="RNase_III_dom"/>
</dbReference>
<dbReference type="InterPro" id="IPR036389">
    <property type="entry name" value="RNase_III_sf"/>
</dbReference>
<dbReference type="NCBIfam" id="TIGR02191">
    <property type="entry name" value="RNaseIII"/>
    <property type="match status" value="1"/>
</dbReference>
<dbReference type="PANTHER" id="PTHR11207:SF0">
    <property type="entry name" value="RIBONUCLEASE 3"/>
    <property type="match status" value="1"/>
</dbReference>
<dbReference type="PANTHER" id="PTHR11207">
    <property type="entry name" value="RIBONUCLEASE III"/>
    <property type="match status" value="1"/>
</dbReference>
<dbReference type="Pfam" id="PF00035">
    <property type="entry name" value="dsrm"/>
    <property type="match status" value="1"/>
</dbReference>
<dbReference type="Pfam" id="PF14622">
    <property type="entry name" value="Ribonucleas_3_3"/>
    <property type="match status" value="1"/>
</dbReference>
<dbReference type="SMART" id="SM00358">
    <property type="entry name" value="DSRM"/>
    <property type="match status" value="1"/>
</dbReference>
<dbReference type="SMART" id="SM00535">
    <property type="entry name" value="RIBOc"/>
    <property type="match status" value="1"/>
</dbReference>
<dbReference type="SUPFAM" id="SSF54768">
    <property type="entry name" value="dsRNA-binding domain-like"/>
    <property type="match status" value="1"/>
</dbReference>
<dbReference type="SUPFAM" id="SSF69065">
    <property type="entry name" value="RNase III domain-like"/>
    <property type="match status" value="1"/>
</dbReference>
<dbReference type="PROSITE" id="PS50137">
    <property type="entry name" value="DS_RBD"/>
    <property type="match status" value="1"/>
</dbReference>
<dbReference type="PROSITE" id="PS00517">
    <property type="entry name" value="RNASE_3_1"/>
    <property type="match status" value="1"/>
</dbReference>
<dbReference type="PROSITE" id="PS50142">
    <property type="entry name" value="RNASE_3_2"/>
    <property type="match status" value="1"/>
</dbReference>
<comment type="function">
    <text evidence="1">Digests double-stranded RNA. Involved in the processing of primary rRNA transcript to yield the immediate precursors to the large and small rRNAs (23S and 16S). Processes some mRNAs, and tRNAs when they are encoded in the rRNA operon. Processes pre-crRNA and tracrRNA of type II CRISPR loci if present in the organism.</text>
</comment>
<comment type="catalytic activity">
    <reaction evidence="1">
        <text>Endonucleolytic cleavage to 5'-phosphomonoester.</text>
        <dbReference type="EC" id="3.1.26.3"/>
    </reaction>
</comment>
<comment type="cofactor">
    <cofactor evidence="1">
        <name>Mg(2+)</name>
        <dbReference type="ChEBI" id="CHEBI:18420"/>
    </cofactor>
</comment>
<comment type="subunit">
    <text evidence="1">Homodimer.</text>
</comment>
<comment type="subcellular location">
    <subcellularLocation>
        <location evidence="1">Cytoplasm</location>
    </subcellularLocation>
</comment>
<comment type="similarity">
    <text evidence="1">Belongs to the ribonuclease III family.</text>
</comment>
<organism>
    <name type="scientific">Coxiella burnetii (strain RSA 331 / Henzerling II)</name>
    <dbReference type="NCBI Taxonomy" id="360115"/>
    <lineage>
        <taxon>Bacteria</taxon>
        <taxon>Pseudomonadati</taxon>
        <taxon>Pseudomonadota</taxon>
        <taxon>Gammaproteobacteria</taxon>
        <taxon>Legionellales</taxon>
        <taxon>Coxiellaceae</taxon>
        <taxon>Coxiella</taxon>
    </lineage>
</organism>
<evidence type="ECO:0000255" key="1">
    <source>
        <dbReference type="HAMAP-Rule" id="MF_00104"/>
    </source>
</evidence>
<sequence length="233" mass="26199">MNHLNKLMERLGHQFNNLELLKIALTHCSSGADNNERLEFLGDSVLGFIIASELYQRRPQAREGDLSRMRASMVNGDELAQMSTKLGINEYLQLGVGEQKSGGKRRRSILADALEAIVGAIYIDAGLETCRRCVLNWYGERVDDLSKLSPKKDAKSLLQEWLQARRLPLPTYEVKITGEAHAQTFTVNCYVKGLPHKTEGVNTTRRRAEQIAAKRFLELLDDGKGDGITERDQ</sequence>
<feature type="chain" id="PRO_1000075742" description="Ribonuclease 3">
    <location>
        <begin position="1"/>
        <end position="233"/>
    </location>
</feature>
<feature type="domain" description="RNase III" evidence="1">
    <location>
        <begin position="4"/>
        <end position="126"/>
    </location>
</feature>
<feature type="domain" description="DRBM" evidence="1">
    <location>
        <begin position="153"/>
        <end position="222"/>
    </location>
</feature>
<feature type="active site" evidence="1">
    <location>
        <position position="43"/>
    </location>
</feature>
<feature type="active site" evidence="1">
    <location>
        <position position="115"/>
    </location>
</feature>
<feature type="binding site" evidence="1">
    <location>
        <position position="39"/>
    </location>
    <ligand>
        <name>Mg(2+)</name>
        <dbReference type="ChEBI" id="CHEBI:18420"/>
    </ligand>
</feature>
<feature type="binding site" evidence="1">
    <location>
        <position position="112"/>
    </location>
    <ligand>
        <name>Mg(2+)</name>
        <dbReference type="ChEBI" id="CHEBI:18420"/>
    </ligand>
</feature>
<feature type="binding site" evidence="1">
    <location>
        <position position="115"/>
    </location>
    <ligand>
        <name>Mg(2+)</name>
        <dbReference type="ChEBI" id="CHEBI:18420"/>
    </ligand>
</feature>
<gene>
    <name evidence="1" type="primary">rnc</name>
    <name type="ordered locus">COXBURSA331_A1686</name>
</gene>
<keyword id="KW-0963">Cytoplasm</keyword>
<keyword id="KW-0255">Endonuclease</keyword>
<keyword id="KW-0378">Hydrolase</keyword>
<keyword id="KW-0460">Magnesium</keyword>
<keyword id="KW-0479">Metal-binding</keyword>
<keyword id="KW-0507">mRNA processing</keyword>
<keyword id="KW-0540">Nuclease</keyword>
<keyword id="KW-0694">RNA-binding</keyword>
<keyword id="KW-0698">rRNA processing</keyword>
<keyword id="KW-0699">rRNA-binding</keyword>
<keyword id="KW-0819">tRNA processing</keyword>